<dbReference type="EMBL" id="HG970334">
    <property type="protein sequence ID" value="CEF87175.1"/>
    <property type="molecule type" value="Genomic_DNA"/>
</dbReference>
<dbReference type="RefSeq" id="XP_011325579.1">
    <property type="nucleotide sequence ID" value="XM_011327277.1"/>
</dbReference>
<dbReference type="SMR" id="V6RVB4"/>
<dbReference type="STRING" id="229533.V6RVB4"/>
<dbReference type="KEGG" id="fgr:FGSG_10816"/>
<dbReference type="VEuPathDB" id="FungiDB:FGRAMPH1_01G20545"/>
<dbReference type="eggNOG" id="KOG0223">
    <property type="taxonomic scope" value="Eukaryota"/>
</dbReference>
<dbReference type="HOGENOM" id="CLU_020019_14_1_1"/>
<dbReference type="InParanoid" id="V6RVB4"/>
<dbReference type="OrthoDB" id="66816at110618"/>
<dbReference type="Proteomes" id="UP000070720">
    <property type="component" value="Chromosome 3"/>
</dbReference>
<dbReference type="GO" id="GO:0005886">
    <property type="term" value="C:plasma membrane"/>
    <property type="evidence" value="ECO:0007669"/>
    <property type="project" value="TreeGrafter"/>
</dbReference>
<dbReference type="GO" id="GO:0015250">
    <property type="term" value="F:water channel activity"/>
    <property type="evidence" value="ECO:0007669"/>
    <property type="project" value="TreeGrafter"/>
</dbReference>
<dbReference type="FunFam" id="1.20.1080.10:FF:000024">
    <property type="entry name" value="MIP aquaporin (Eurofung)"/>
    <property type="match status" value="1"/>
</dbReference>
<dbReference type="Gene3D" id="1.20.1080.10">
    <property type="entry name" value="Glycerol uptake facilitator protein"/>
    <property type="match status" value="1"/>
</dbReference>
<dbReference type="InterPro" id="IPR023271">
    <property type="entry name" value="Aquaporin-like"/>
</dbReference>
<dbReference type="InterPro" id="IPR034294">
    <property type="entry name" value="Aquaporin_transptr"/>
</dbReference>
<dbReference type="InterPro" id="IPR000425">
    <property type="entry name" value="MIP"/>
</dbReference>
<dbReference type="PANTHER" id="PTHR19139:SF283">
    <property type="entry name" value="AQUAPORIN"/>
    <property type="match status" value="1"/>
</dbReference>
<dbReference type="PANTHER" id="PTHR19139">
    <property type="entry name" value="AQUAPORIN TRANSPORTER"/>
    <property type="match status" value="1"/>
</dbReference>
<dbReference type="Pfam" id="PF00230">
    <property type="entry name" value="MIP"/>
    <property type="match status" value="1"/>
</dbReference>
<dbReference type="PRINTS" id="PR00783">
    <property type="entry name" value="MINTRINSICP"/>
</dbReference>
<dbReference type="SUPFAM" id="SSF81338">
    <property type="entry name" value="Aquaporin-like"/>
    <property type="match status" value="1"/>
</dbReference>
<proteinExistence type="inferred from homology"/>
<name>AQP5_GIBZE</name>
<gene>
    <name evidence="5" type="primary">FgAQP5</name>
    <name type="ORF">FG10816</name>
    <name type="ORF">FGRAMPH1_01T20545</name>
</gene>
<accession>V6RVB4</accession>
<protein>
    <recommendedName>
        <fullName evidence="5">Probable aquaporin-5</fullName>
    </recommendedName>
</protein>
<comment type="function">
    <text evidence="7">Probable water channel that may have redundant functions with FgAQP3.</text>
</comment>
<comment type="catalytic activity">
    <reaction evidence="7">
        <text>H2O(in) = H2O(out)</text>
        <dbReference type="Rhea" id="RHEA:29667"/>
        <dbReference type="ChEBI" id="CHEBI:15377"/>
    </reaction>
</comment>
<comment type="subcellular location">
    <subcellularLocation>
        <location evidence="1">Membrane</location>
        <topology evidence="1">Multi-pass membrane protein</topology>
    </subcellularLocation>
</comment>
<comment type="domain">
    <text evidence="7">Aquaporins contain two tandem repeats each containing three membrane-spanning domains and a pore-forming loop with the signature motif Asn-Pro-Ala (NPA).</text>
</comment>
<comment type="disruption phenotype">
    <text evidence="4">Leads to no variable phenotypes.</text>
</comment>
<comment type="similarity">
    <text evidence="6">Belongs to the MIP/aquaporin (TC 1.A.8) family.</text>
</comment>
<reference key="1">
    <citation type="journal article" date="2007" name="Science">
        <title>The Fusarium graminearum genome reveals a link between localized polymorphism and pathogen specialization.</title>
        <authorList>
            <person name="Cuomo C.A."/>
            <person name="Gueldener U."/>
            <person name="Xu J.-R."/>
            <person name="Trail F."/>
            <person name="Turgeon B.G."/>
            <person name="Di Pietro A."/>
            <person name="Walton J.D."/>
            <person name="Ma L.-J."/>
            <person name="Baker S.E."/>
            <person name="Rep M."/>
            <person name="Adam G."/>
            <person name="Antoniw J."/>
            <person name="Baldwin T."/>
            <person name="Calvo S.E."/>
            <person name="Chang Y.-L."/>
            <person name="DeCaprio D."/>
            <person name="Gale L.R."/>
            <person name="Gnerre S."/>
            <person name="Goswami R.S."/>
            <person name="Hammond-Kosack K."/>
            <person name="Harris L.J."/>
            <person name="Hilburn K."/>
            <person name="Kennell J.C."/>
            <person name="Kroken S."/>
            <person name="Magnuson J.K."/>
            <person name="Mannhaupt G."/>
            <person name="Mauceli E.W."/>
            <person name="Mewes H.-W."/>
            <person name="Mitterbauer R."/>
            <person name="Muehlbauer G."/>
            <person name="Muensterkoetter M."/>
            <person name="Nelson D."/>
            <person name="O'Donnell K."/>
            <person name="Ouellet T."/>
            <person name="Qi W."/>
            <person name="Quesneville H."/>
            <person name="Roncero M.I.G."/>
            <person name="Seong K.-Y."/>
            <person name="Tetko I.V."/>
            <person name="Urban M."/>
            <person name="Waalwijk C."/>
            <person name="Ward T.J."/>
            <person name="Yao J."/>
            <person name="Birren B.W."/>
            <person name="Kistler H.C."/>
        </authorList>
    </citation>
    <scope>NUCLEOTIDE SEQUENCE [LARGE SCALE GENOMIC DNA]</scope>
    <source>
        <strain>ATCC MYA-4620 / CBS 123657 / FGSC 9075 / NRRL 31084 / PH-1</strain>
    </source>
</reference>
<reference key="2">
    <citation type="journal article" date="2010" name="Nature">
        <title>Comparative genomics reveals mobile pathogenicity chromosomes in Fusarium.</title>
        <authorList>
            <person name="Ma L.-J."/>
            <person name="van der Does H.C."/>
            <person name="Borkovich K.A."/>
            <person name="Coleman J.J."/>
            <person name="Daboussi M.-J."/>
            <person name="Di Pietro A."/>
            <person name="Dufresne M."/>
            <person name="Freitag M."/>
            <person name="Grabherr M."/>
            <person name="Henrissat B."/>
            <person name="Houterman P.M."/>
            <person name="Kang S."/>
            <person name="Shim W.-B."/>
            <person name="Woloshuk C."/>
            <person name="Xie X."/>
            <person name="Xu J.-R."/>
            <person name="Antoniw J."/>
            <person name="Baker S.E."/>
            <person name="Bluhm B.H."/>
            <person name="Breakspear A."/>
            <person name="Brown D.W."/>
            <person name="Butchko R.A.E."/>
            <person name="Chapman S."/>
            <person name="Coulson R."/>
            <person name="Coutinho P.M."/>
            <person name="Danchin E.G.J."/>
            <person name="Diener A."/>
            <person name="Gale L.R."/>
            <person name="Gardiner D.M."/>
            <person name="Goff S."/>
            <person name="Hammond-Kosack K.E."/>
            <person name="Hilburn K."/>
            <person name="Hua-Van A."/>
            <person name="Jonkers W."/>
            <person name="Kazan K."/>
            <person name="Kodira C.D."/>
            <person name="Koehrsen M."/>
            <person name="Kumar L."/>
            <person name="Lee Y.-H."/>
            <person name="Li L."/>
            <person name="Manners J.M."/>
            <person name="Miranda-Saavedra D."/>
            <person name="Mukherjee M."/>
            <person name="Park G."/>
            <person name="Park J."/>
            <person name="Park S.-Y."/>
            <person name="Proctor R.H."/>
            <person name="Regev A."/>
            <person name="Ruiz-Roldan M.C."/>
            <person name="Sain D."/>
            <person name="Sakthikumar S."/>
            <person name="Sykes S."/>
            <person name="Schwartz D.C."/>
            <person name="Turgeon B.G."/>
            <person name="Wapinski I."/>
            <person name="Yoder O."/>
            <person name="Young S."/>
            <person name="Zeng Q."/>
            <person name="Zhou S."/>
            <person name="Galagan J."/>
            <person name="Cuomo C.A."/>
            <person name="Kistler H.C."/>
            <person name="Rep M."/>
        </authorList>
    </citation>
    <scope>GENOME REANNOTATION</scope>
    <source>
        <strain>ATCC MYA-4620 / CBS 123657 / FGSC 9075 / NRRL 31084 / PH-1</strain>
    </source>
</reference>
<reference key="3">
    <citation type="journal article" date="2015" name="BMC Genomics">
        <title>The completed genome sequence of the pathogenic ascomycete fungus Fusarium graminearum.</title>
        <authorList>
            <person name="King R."/>
            <person name="Urban M."/>
            <person name="Hammond-Kosack M.C.U."/>
            <person name="Hassani-Pak K."/>
            <person name="Hammond-Kosack K.E."/>
        </authorList>
    </citation>
    <scope>NUCLEOTIDE SEQUENCE [LARGE SCALE GENOMIC DNA]</scope>
    <source>
        <strain>ATCC MYA-4620 / CBS 123657 / FGSC 9075 / NRRL 31084 / PH-1</strain>
    </source>
</reference>
<reference key="4">
    <citation type="journal article" date="2018" name="Curr. Genet.">
        <title>Aquaporin1 regulates development, secondary metabolism and stress responses in Fusarium graminearum.</title>
        <authorList>
            <person name="Ding M."/>
            <person name="Li J."/>
            <person name="Fan X."/>
            <person name="He F."/>
            <person name="Yu X."/>
            <person name="Chen L."/>
            <person name="Zou S."/>
            <person name="Liang Y."/>
            <person name="Yu J."/>
        </authorList>
    </citation>
    <scope>IDENTIFICATION</scope>
    <scope>DISRUPTION PHENOTYPE</scope>
    <scope>DOMAIN</scope>
</reference>
<feature type="chain" id="PRO_0000457435" description="Probable aquaporin-5">
    <location>
        <begin position="1"/>
        <end position="547"/>
    </location>
</feature>
<feature type="topological domain" description="Cytoplasmic" evidence="6">
    <location>
        <begin position="1"/>
        <end position="269"/>
    </location>
</feature>
<feature type="transmembrane region" description="Helical" evidence="1">
    <location>
        <begin position="270"/>
        <end position="290"/>
    </location>
</feature>
<feature type="topological domain" description="Extracellular" evidence="6">
    <location>
        <begin position="291"/>
        <end position="316"/>
    </location>
</feature>
<feature type="transmembrane region" description="Helical" evidence="1">
    <location>
        <begin position="317"/>
        <end position="337"/>
    </location>
</feature>
<feature type="topological domain" description="Cytoplasmic" evidence="6">
    <location>
        <begin position="338"/>
        <end position="363"/>
    </location>
</feature>
<feature type="transmembrane region" description="Helical" evidence="1">
    <location>
        <begin position="364"/>
        <end position="384"/>
    </location>
</feature>
<feature type="topological domain" description="Extracellular" evidence="6">
    <location>
        <begin position="385"/>
        <end position="400"/>
    </location>
</feature>
<feature type="transmembrane region" description="Helical" evidence="1">
    <location>
        <begin position="401"/>
        <end position="421"/>
    </location>
</feature>
<feature type="topological domain" description="Cytoplasmic" evidence="6">
    <location>
        <begin position="422"/>
        <end position="428"/>
    </location>
</feature>
<feature type="transmembrane region" description="Helical" evidence="1">
    <location>
        <begin position="429"/>
        <end position="449"/>
    </location>
</feature>
<feature type="topological domain" description="Extracellular" evidence="6">
    <location>
        <begin position="450"/>
        <end position="475"/>
    </location>
</feature>
<feature type="transmembrane region" description="Helical" evidence="1">
    <location>
        <begin position="476"/>
        <end position="496"/>
    </location>
</feature>
<feature type="topological domain" description="Cytoplasmic" evidence="6">
    <location>
        <begin position="497"/>
        <end position="547"/>
    </location>
</feature>
<feature type="region of interest" description="Disordered" evidence="3">
    <location>
        <begin position="1"/>
        <end position="208"/>
    </location>
</feature>
<feature type="region of interest" description="Disordered" evidence="3">
    <location>
        <begin position="510"/>
        <end position="547"/>
    </location>
</feature>
<feature type="short sequence motif" description="NPA 1" evidence="7">
    <location>
        <begin position="345"/>
        <end position="347"/>
    </location>
</feature>
<feature type="short sequence motif" description="NPA 2" evidence="7">
    <location>
        <begin position="457"/>
        <end position="459"/>
    </location>
</feature>
<feature type="compositionally biased region" description="Polar residues" evidence="3">
    <location>
        <begin position="1"/>
        <end position="13"/>
    </location>
</feature>
<feature type="compositionally biased region" description="Low complexity" evidence="3">
    <location>
        <begin position="15"/>
        <end position="32"/>
    </location>
</feature>
<feature type="compositionally biased region" description="Basic and acidic residues" evidence="3">
    <location>
        <begin position="152"/>
        <end position="169"/>
    </location>
</feature>
<feature type="compositionally biased region" description="Basic and acidic residues" evidence="3">
    <location>
        <begin position="198"/>
        <end position="208"/>
    </location>
</feature>
<feature type="glycosylation site" description="N-linked (GlcNAc...) asparagine" evidence="2">
    <location>
        <position position="302"/>
    </location>
</feature>
<feature type="glycosylation site" description="N-linked (GlcNAc...) asparagine" evidence="2">
    <location>
        <position position="314"/>
    </location>
</feature>
<sequence length="547" mass="60103">MSSSILNNRSARSTPAGANPAFNPPAEASSSSTQSGVPYIRENSPEAESIPSNPAMTPIITHGDSLASPGGRNSEADTVVPLQPAVSQDAIRSRPGSRTGNFVTPKAARFSQDGAEPIMQYSSGSVKSARRRTREREDYDFDQAADYAPMSEYERYYRNEGRNDRDRYTRRGPYPPPTFMNRRRAPPLDSDEEFYSSDDPRIPPNDRRRMMDEEAGYPGRPHAFRRTSTLNGFNITTGKLQWNELSRQEKSEIMRLPLTQWMNSNFKNHFVAGVGEFIGTTMFLFFAFAGTEVANIQADTTNRTTTGESTGSLNVSKLLYISIIFGFSLMVNVWVFFRISGGLFNPAVTMAMLMVKAISVTRAIVLFLAQILGSMLASVVVRYLFPETFNVRTTLGGGASLVQGVFIEALLTAELVFTIFMLAKEKHRATFIAPVGIGLALFIAEMVGVQFTGGSLNPARSFGPCVITGSFDTEHWIYWVGPAIGSLIAVCFYWFIKTLEYEMANPGADGDDLNDPTKNPEKRAEIQASKPVPTAAFGSGKTASILS</sequence>
<organism>
    <name type="scientific">Gibberella zeae (strain ATCC MYA-4620 / CBS 123657 / FGSC 9075 / NRRL 31084 / PH-1)</name>
    <name type="common">Wheat head blight fungus</name>
    <name type="synonym">Fusarium graminearum</name>
    <dbReference type="NCBI Taxonomy" id="229533"/>
    <lineage>
        <taxon>Eukaryota</taxon>
        <taxon>Fungi</taxon>
        <taxon>Dikarya</taxon>
        <taxon>Ascomycota</taxon>
        <taxon>Pezizomycotina</taxon>
        <taxon>Sordariomycetes</taxon>
        <taxon>Hypocreomycetidae</taxon>
        <taxon>Hypocreales</taxon>
        <taxon>Nectriaceae</taxon>
        <taxon>Fusarium</taxon>
    </lineage>
</organism>
<keyword id="KW-0325">Glycoprotein</keyword>
<keyword id="KW-0472">Membrane</keyword>
<keyword id="KW-1185">Reference proteome</keyword>
<keyword id="KW-0677">Repeat</keyword>
<keyword id="KW-0812">Transmembrane</keyword>
<keyword id="KW-1133">Transmembrane helix</keyword>
<evidence type="ECO:0000255" key="1"/>
<evidence type="ECO:0000255" key="2">
    <source>
        <dbReference type="PROSITE-ProRule" id="PRU00498"/>
    </source>
</evidence>
<evidence type="ECO:0000256" key="3">
    <source>
        <dbReference type="SAM" id="MobiDB-lite"/>
    </source>
</evidence>
<evidence type="ECO:0000269" key="4">
    <source>
    </source>
</evidence>
<evidence type="ECO:0000303" key="5">
    <source>
    </source>
</evidence>
<evidence type="ECO:0000305" key="6"/>
<evidence type="ECO:0000305" key="7">
    <source>
    </source>
</evidence>